<feature type="chain" id="PRO_1000137274" description="Acetyl-coenzyme A synthetase">
    <location>
        <begin position="1"/>
        <end position="660"/>
    </location>
</feature>
<feature type="binding site" evidence="1">
    <location>
        <begin position="197"/>
        <end position="200"/>
    </location>
    <ligand>
        <name>CoA</name>
        <dbReference type="ChEBI" id="CHEBI:57287"/>
    </ligand>
</feature>
<feature type="binding site" evidence="1">
    <location>
        <position position="317"/>
    </location>
    <ligand>
        <name>CoA</name>
        <dbReference type="ChEBI" id="CHEBI:57287"/>
    </ligand>
</feature>
<feature type="binding site" evidence="1">
    <location>
        <begin position="397"/>
        <end position="399"/>
    </location>
    <ligand>
        <name>ATP</name>
        <dbReference type="ChEBI" id="CHEBI:30616"/>
    </ligand>
</feature>
<feature type="binding site" evidence="1">
    <location>
        <begin position="421"/>
        <end position="426"/>
    </location>
    <ligand>
        <name>ATP</name>
        <dbReference type="ChEBI" id="CHEBI:30616"/>
    </ligand>
</feature>
<feature type="binding site" evidence="1">
    <location>
        <position position="512"/>
    </location>
    <ligand>
        <name>ATP</name>
        <dbReference type="ChEBI" id="CHEBI:30616"/>
    </ligand>
</feature>
<feature type="binding site" evidence="1">
    <location>
        <position position="528"/>
    </location>
    <ligand>
        <name>ATP</name>
        <dbReference type="ChEBI" id="CHEBI:30616"/>
    </ligand>
</feature>
<feature type="binding site" evidence="1">
    <location>
        <position position="536"/>
    </location>
    <ligand>
        <name>CoA</name>
        <dbReference type="ChEBI" id="CHEBI:57287"/>
    </ligand>
</feature>
<feature type="binding site" evidence="1">
    <location>
        <position position="539"/>
    </location>
    <ligand>
        <name>ATP</name>
        <dbReference type="ChEBI" id="CHEBI:30616"/>
    </ligand>
</feature>
<feature type="binding site" evidence="1">
    <location>
        <position position="550"/>
    </location>
    <ligand>
        <name>Mg(2+)</name>
        <dbReference type="ChEBI" id="CHEBI:18420"/>
    </ligand>
</feature>
<feature type="binding site" evidence="1">
    <location>
        <position position="555"/>
    </location>
    <ligand>
        <name>Mg(2+)</name>
        <dbReference type="ChEBI" id="CHEBI:18420"/>
    </ligand>
</feature>
<feature type="modified residue" description="N6-acetyllysine" evidence="1">
    <location>
        <position position="625"/>
    </location>
</feature>
<gene>
    <name evidence="1" type="primary">acsA</name>
    <name type="ordered locus">Rpic_2099</name>
</gene>
<comment type="function">
    <text evidence="1">Catalyzes the conversion of acetate into acetyl-CoA (AcCoA), an essential intermediate at the junction of anabolic and catabolic pathways. AcsA undergoes a two-step reaction. In the first half reaction, AcsA combines acetate with ATP to form acetyl-adenylate (AcAMP) intermediate. In the second half reaction, it can then transfer the acetyl group from AcAMP to the sulfhydryl group of CoA, forming the product AcCoA.</text>
</comment>
<comment type="catalytic activity">
    <reaction evidence="1">
        <text>acetate + ATP + CoA = acetyl-CoA + AMP + diphosphate</text>
        <dbReference type="Rhea" id="RHEA:23176"/>
        <dbReference type="ChEBI" id="CHEBI:30089"/>
        <dbReference type="ChEBI" id="CHEBI:30616"/>
        <dbReference type="ChEBI" id="CHEBI:33019"/>
        <dbReference type="ChEBI" id="CHEBI:57287"/>
        <dbReference type="ChEBI" id="CHEBI:57288"/>
        <dbReference type="ChEBI" id="CHEBI:456215"/>
        <dbReference type="EC" id="6.2.1.1"/>
    </reaction>
</comment>
<comment type="cofactor">
    <cofactor evidence="1">
        <name>Mg(2+)</name>
        <dbReference type="ChEBI" id="CHEBI:18420"/>
    </cofactor>
</comment>
<comment type="PTM">
    <text evidence="1">Acetylated. Deacetylation by the SIR2-homolog deacetylase activates the enzyme.</text>
</comment>
<comment type="similarity">
    <text evidence="1">Belongs to the ATP-dependent AMP-binding enzyme family.</text>
</comment>
<sequence>MAGIESVLQETRVFNPPESFVKQANIAGMDAYRALCAEAEHDYEGFWARLAHEHLLWHKPFSKVLDESNAPFYKWFEDGELNASYNCLERNLENGNADKVAIIFETDDGKVSRTTYRELHARVCRFANGLKALGIKKGDRVVIYMPMSVEGIVAMQACARIGATHSVVFGGFSAKSLQERIVDVGAVALITADEQMRGGKALPLKAIADEALAMEGTDAVKHVIVYRRTNGNVNWVEGRDRAMDEVEAGQPDTCEVTPVSAEHPLFILYTSGSTGKPKGVQHSTGGYLLWALLTMQWTFDLKPDDIFWCTADIGWVTGHSYIAYGPLAAGATQVVFEGVPTYPNAGRFWDMIQRHKVNTFYTAPTAIRSLIKAAEADEKVHPKQYDLSSLRLLGTVGEPINPEAWMWYHTNIGGGRCPIVDTFWQTETGGHMMTPLPGATPLVPGSCTLPLPGIMAAVVDETGHDVPNGQGGILVVKRPWPSMIRTIWGDPERFKKSYFPEELGGKLYLAGDGSIRDKDTGYFTIMGRIDDVLNVSGHRMGTMEIESALVANPIVAEAAVVGRPDDMTGEAICAFVVLKRSRPDGDEAKQIANELRNWVGKEIGPIAKPKDIRFGDNLPKTRSGKIMRRLLRSLAKGEDITQDTSTLENPAILDQLKETR</sequence>
<dbReference type="EC" id="6.2.1.1" evidence="1"/>
<dbReference type="EMBL" id="CP001068">
    <property type="protein sequence ID" value="ACD27233.1"/>
    <property type="molecule type" value="Genomic_DNA"/>
</dbReference>
<dbReference type="SMR" id="B2U6V1"/>
<dbReference type="STRING" id="402626.Rpic_2099"/>
<dbReference type="KEGG" id="rpi:Rpic_2099"/>
<dbReference type="eggNOG" id="COG0365">
    <property type="taxonomic scope" value="Bacteria"/>
</dbReference>
<dbReference type="HOGENOM" id="CLU_000022_3_6_4"/>
<dbReference type="GO" id="GO:0005829">
    <property type="term" value="C:cytosol"/>
    <property type="evidence" value="ECO:0007669"/>
    <property type="project" value="TreeGrafter"/>
</dbReference>
<dbReference type="GO" id="GO:0003987">
    <property type="term" value="F:acetate-CoA ligase activity"/>
    <property type="evidence" value="ECO:0007669"/>
    <property type="project" value="UniProtKB-UniRule"/>
</dbReference>
<dbReference type="GO" id="GO:0016208">
    <property type="term" value="F:AMP binding"/>
    <property type="evidence" value="ECO:0007669"/>
    <property type="project" value="InterPro"/>
</dbReference>
<dbReference type="GO" id="GO:0005524">
    <property type="term" value="F:ATP binding"/>
    <property type="evidence" value="ECO:0007669"/>
    <property type="project" value="UniProtKB-KW"/>
</dbReference>
<dbReference type="GO" id="GO:0046872">
    <property type="term" value="F:metal ion binding"/>
    <property type="evidence" value="ECO:0007669"/>
    <property type="project" value="UniProtKB-KW"/>
</dbReference>
<dbReference type="GO" id="GO:0019427">
    <property type="term" value="P:acetyl-CoA biosynthetic process from acetate"/>
    <property type="evidence" value="ECO:0007669"/>
    <property type="project" value="InterPro"/>
</dbReference>
<dbReference type="CDD" id="cd05966">
    <property type="entry name" value="ACS"/>
    <property type="match status" value="1"/>
</dbReference>
<dbReference type="FunFam" id="3.40.50.12780:FF:000001">
    <property type="entry name" value="Acetyl-coenzyme A synthetase"/>
    <property type="match status" value="1"/>
</dbReference>
<dbReference type="Gene3D" id="3.30.300.30">
    <property type="match status" value="1"/>
</dbReference>
<dbReference type="Gene3D" id="3.40.50.12780">
    <property type="entry name" value="N-terminal domain of ligase-like"/>
    <property type="match status" value="1"/>
</dbReference>
<dbReference type="HAMAP" id="MF_01123">
    <property type="entry name" value="Ac_CoA_synth"/>
    <property type="match status" value="1"/>
</dbReference>
<dbReference type="InterPro" id="IPR011904">
    <property type="entry name" value="Ac_CoA_lig"/>
</dbReference>
<dbReference type="InterPro" id="IPR032387">
    <property type="entry name" value="ACAS_N"/>
</dbReference>
<dbReference type="InterPro" id="IPR025110">
    <property type="entry name" value="AMP-bd_C"/>
</dbReference>
<dbReference type="InterPro" id="IPR045851">
    <property type="entry name" value="AMP-bd_C_sf"/>
</dbReference>
<dbReference type="InterPro" id="IPR020845">
    <property type="entry name" value="AMP-binding_CS"/>
</dbReference>
<dbReference type="InterPro" id="IPR000873">
    <property type="entry name" value="AMP-dep_synth/lig_dom"/>
</dbReference>
<dbReference type="InterPro" id="IPR042099">
    <property type="entry name" value="ANL_N_sf"/>
</dbReference>
<dbReference type="NCBIfam" id="TIGR02188">
    <property type="entry name" value="Ac_CoA_lig_AcsA"/>
    <property type="match status" value="1"/>
</dbReference>
<dbReference type="NCBIfam" id="NF001208">
    <property type="entry name" value="PRK00174.1"/>
    <property type="match status" value="1"/>
</dbReference>
<dbReference type="PANTHER" id="PTHR24095">
    <property type="entry name" value="ACETYL-COENZYME A SYNTHETASE"/>
    <property type="match status" value="1"/>
</dbReference>
<dbReference type="PANTHER" id="PTHR24095:SF14">
    <property type="entry name" value="ACETYL-COENZYME A SYNTHETASE 1"/>
    <property type="match status" value="1"/>
</dbReference>
<dbReference type="Pfam" id="PF16177">
    <property type="entry name" value="ACAS_N"/>
    <property type="match status" value="1"/>
</dbReference>
<dbReference type="Pfam" id="PF00501">
    <property type="entry name" value="AMP-binding"/>
    <property type="match status" value="1"/>
</dbReference>
<dbReference type="Pfam" id="PF13193">
    <property type="entry name" value="AMP-binding_C"/>
    <property type="match status" value="1"/>
</dbReference>
<dbReference type="SUPFAM" id="SSF56801">
    <property type="entry name" value="Acetyl-CoA synthetase-like"/>
    <property type="match status" value="1"/>
</dbReference>
<dbReference type="PROSITE" id="PS00455">
    <property type="entry name" value="AMP_BINDING"/>
    <property type="match status" value="1"/>
</dbReference>
<evidence type="ECO:0000255" key="1">
    <source>
        <dbReference type="HAMAP-Rule" id="MF_01123"/>
    </source>
</evidence>
<accession>B2U6V1</accession>
<reference key="1">
    <citation type="submission" date="2008-05" db="EMBL/GenBank/DDBJ databases">
        <title>Complete sequence of chromosome 1 of Ralstonia pickettii 12J.</title>
        <authorList>
            <person name="Lucas S."/>
            <person name="Copeland A."/>
            <person name="Lapidus A."/>
            <person name="Glavina del Rio T."/>
            <person name="Dalin E."/>
            <person name="Tice H."/>
            <person name="Bruce D."/>
            <person name="Goodwin L."/>
            <person name="Pitluck S."/>
            <person name="Meincke L."/>
            <person name="Brettin T."/>
            <person name="Detter J.C."/>
            <person name="Han C."/>
            <person name="Kuske C.R."/>
            <person name="Schmutz J."/>
            <person name="Larimer F."/>
            <person name="Land M."/>
            <person name="Hauser L."/>
            <person name="Kyrpides N."/>
            <person name="Mikhailova N."/>
            <person name="Marsh T."/>
            <person name="Richardson P."/>
        </authorList>
    </citation>
    <scope>NUCLEOTIDE SEQUENCE [LARGE SCALE GENOMIC DNA]</scope>
    <source>
        <strain>12J</strain>
    </source>
</reference>
<organism>
    <name type="scientific">Ralstonia pickettii (strain 12J)</name>
    <dbReference type="NCBI Taxonomy" id="402626"/>
    <lineage>
        <taxon>Bacteria</taxon>
        <taxon>Pseudomonadati</taxon>
        <taxon>Pseudomonadota</taxon>
        <taxon>Betaproteobacteria</taxon>
        <taxon>Burkholderiales</taxon>
        <taxon>Burkholderiaceae</taxon>
        <taxon>Ralstonia</taxon>
    </lineage>
</organism>
<protein>
    <recommendedName>
        <fullName evidence="1">Acetyl-coenzyme A synthetase</fullName>
        <shortName evidence="1">AcCoA synthetase</shortName>
        <shortName evidence="1">Acs</shortName>
        <ecNumber evidence="1">6.2.1.1</ecNumber>
    </recommendedName>
    <alternativeName>
        <fullName evidence="1">Acetate--CoA ligase</fullName>
    </alternativeName>
    <alternativeName>
        <fullName evidence="1">Acyl-activating enzyme</fullName>
    </alternativeName>
</protein>
<proteinExistence type="inferred from homology"/>
<keyword id="KW-0007">Acetylation</keyword>
<keyword id="KW-0067">ATP-binding</keyword>
<keyword id="KW-0436">Ligase</keyword>
<keyword id="KW-0460">Magnesium</keyword>
<keyword id="KW-0479">Metal-binding</keyword>
<keyword id="KW-0547">Nucleotide-binding</keyword>
<name>ACSA_RALPJ</name>